<keyword id="KW-0238">DNA-binding</keyword>
<keyword id="KW-0479">Metal-binding</keyword>
<keyword id="KW-0539">Nucleus</keyword>
<keyword id="KW-0862">Zinc</keyword>
<protein>
    <recommendedName>
        <fullName>Doublesex- and mab-3-related transcription factor A2</fullName>
    </recommendedName>
    <alternativeName>
        <fullName>Doublesex- and mab-3-related transcription factor 5</fullName>
    </alternativeName>
</protein>
<organism>
    <name type="scientific">Monopterus albus</name>
    <name type="common">Swamp eel</name>
    <dbReference type="NCBI Taxonomy" id="43700"/>
    <lineage>
        <taxon>Eukaryota</taxon>
        <taxon>Metazoa</taxon>
        <taxon>Chordata</taxon>
        <taxon>Craniata</taxon>
        <taxon>Vertebrata</taxon>
        <taxon>Euteleostomi</taxon>
        <taxon>Actinopterygii</taxon>
        <taxon>Neopterygii</taxon>
        <taxon>Teleostei</taxon>
        <taxon>Neoteleostei</taxon>
        <taxon>Acanthomorphata</taxon>
        <taxon>Anabantaria</taxon>
        <taxon>Synbranchiformes</taxon>
        <taxon>Synbranchidae</taxon>
        <taxon>Monopterus</taxon>
    </lineage>
</organism>
<comment type="function">
    <text>May be involved in sexual development.</text>
</comment>
<comment type="subcellular location">
    <subcellularLocation>
        <location evidence="2">Nucleus</location>
    </subcellularLocation>
</comment>
<comment type="similarity">
    <text evidence="4">Belongs to the DMRT family.</text>
</comment>
<accession>A8TSS9</accession>
<name>DMTA2_MONAL</name>
<evidence type="ECO:0000255" key="1"/>
<evidence type="ECO:0000255" key="2">
    <source>
        <dbReference type="PROSITE-ProRule" id="PRU00070"/>
    </source>
</evidence>
<evidence type="ECO:0000256" key="3">
    <source>
        <dbReference type="SAM" id="MobiDB-lite"/>
    </source>
</evidence>
<evidence type="ECO:0000305" key="4"/>
<sequence>MDLRPELPTASSASQVHPGAAAAAAAASIPVSMAGNLLRGPPLLLRAADKYPRTPKCARCRNHGVVSALKGHKRYCRWKDCMCAKCTLIAERQRVMAAQVALRRQQAQEENEARELQLLYGTAEGLALAAANGIIPPRPNYEVFGSVNNETNSDSSIPKYELFSKSQLSGSATPQQSVGKPASTESDSAPGISSPEGRHGGSGSENGDSESFISSPVSKPIKDGEETPGSVSSLGSDSGSETDKDDQEPSPSSAASRHMNAIDILTRVFPSHKRSVQELVLQGCGKDVVRAIEQILNNSGAQGPNKTGPEETWTAERMLQNAQQLPQSSASTTTPTRPMLPGAMTLSNRSAFSPLQPNAPHFGADPSTYPLGTPLGLNPLRLAYSAHSRGLAFMTPYSTTGLMPTLGFRPPMDYAFSDLIRDRTMLHKEQGYASGLYGPLVNNTPDKQ</sequence>
<dbReference type="EMBL" id="EU053217">
    <property type="protein sequence ID" value="ABW06380.1"/>
    <property type="molecule type" value="mRNA"/>
</dbReference>
<dbReference type="SMR" id="A8TSS9"/>
<dbReference type="STRING" id="43700.ENSMALP00000023516"/>
<dbReference type="OrthoDB" id="6162476at2759"/>
<dbReference type="Proteomes" id="UP000261600">
    <property type="component" value="Whole Genome Shotgun Assembly"/>
</dbReference>
<dbReference type="GO" id="GO:0005634">
    <property type="term" value="C:nucleus"/>
    <property type="evidence" value="ECO:0007669"/>
    <property type="project" value="UniProtKB-SubCell"/>
</dbReference>
<dbReference type="GO" id="GO:0000981">
    <property type="term" value="F:DNA-binding transcription factor activity, RNA polymerase II-specific"/>
    <property type="evidence" value="ECO:0007669"/>
    <property type="project" value="TreeGrafter"/>
</dbReference>
<dbReference type="GO" id="GO:0046872">
    <property type="term" value="F:metal ion binding"/>
    <property type="evidence" value="ECO:0007669"/>
    <property type="project" value="UniProtKB-KW"/>
</dbReference>
<dbReference type="GO" id="GO:0000978">
    <property type="term" value="F:RNA polymerase II cis-regulatory region sequence-specific DNA binding"/>
    <property type="evidence" value="ECO:0007669"/>
    <property type="project" value="TreeGrafter"/>
</dbReference>
<dbReference type="GO" id="GO:0007281">
    <property type="term" value="P:germ cell development"/>
    <property type="evidence" value="ECO:0007669"/>
    <property type="project" value="TreeGrafter"/>
</dbReference>
<dbReference type="GO" id="GO:0007548">
    <property type="term" value="P:sex differentiation"/>
    <property type="evidence" value="ECO:0007669"/>
    <property type="project" value="TreeGrafter"/>
</dbReference>
<dbReference type="FunFam" id="4.10.1040.10:FF:000001">
    <property type="entry name" value="doublesex- and mab-3-related transcription factor 1"/>
    <property type="match status" value="1"/>
</dbReference>
<dbReference type="Gene3D" id="4.10.1040.10">
    <property type="entry name" value="DM DNA-binding domain"/>
    <property type="match status" value="1"/>
</dbReference>
<dbReference type="InterPro" id="IPR001275">
    <property type="entry name" value="DM_DNA-bd"/>
</dbReference>
<dbReference type="InterPro" id="IPR036407">
    <property type="entry name" value="DM_DNA-bd_sf"/>
</dbReference>
<dbReference type="InterPro" id="IPR005173">
    <property type="entry name" value="DMA"/>
</dbReference>
<dbReference type="InterPro" id="IPR026607">
    <property type="entry name" value="DMRT"/>
</dbReference>
<dbReference type="InterPro" id="IPR046472">
    <property type="entry name" value="DMRT5_1_DMB_dom"/>
</dbReference>
<dbReference type="InterPro" id="IPR009060">
    <property type="entry name" value="UBA-like_sf"/>
</dbReference>
<dbReference type="PANTHER" id="PTHR12322">
    <property type="entry name" value="DOUBLESEX AND MAB-3 RELATED TRANSCRIPTION FACTOR DMRT"/>
    <property type="match status" value="1"/>
</dbReference>
<dbReference type="PANTHER" id="PTHR12322:SF76">
    <property type="entry name" value="DOUBLESEX- AND MAB-3-RELATED TRANSCRIPTION FACTOR A2"/>
    <property type="match status" value="1"/>
</dbReference>
<dbReference type="Pfam" id="PF00751">
    <property type="entry name" value="DM"/>
    <property type="match status" value="1"/>
</dbReference>
<dbReference type="Pfam" id="PF03474">
    <property type="entry name" value="DMA"/>
    <property type="match status" value="1"/>
</dbReference>
<dbReference type="Pfam" id="PF20624">
    <property type="entry name" value="DMRT5_DMB"/>
    <property type="match status" value="1"/>
</dbReference>
<dbReference type="SMART" id="SM00301">
    <property type="entry name" value="DM"/>
    <property type="match status" value="1"/>
</dbReference>
<dbReference type="SUPFAM" id="SSF82927">
    <property type="entry name" value="Cysteine-rich DNA binding domain, (DM domain)"/>
    <property type="match status" value="1"/>
</dbReference>
<dbReference type="SUPFAM" id="SSF46934">
    <property type="entry name" value="UBA-like"/>
    <property type="match status" value="1"/>
</dbReference>
<dbReference type="PROSITE" id="PS40000">
    <property type="entry name" value="DM_1"/>
    <property type="match status" value="1"/>
</dbReference>
<dbReference type="PROSITE" id="PS50809">
    <property type="entry name" value="DM_2"/>
    <property type="match status" value="1"/>
</dbReference>
<reference key="1">
    <citation type="submission" date="2007-07" db="EMBL/GenBank/DDBJ databases">
        <title>Monopterus albus doublesex and mab-3 related factor 5.</title>
        <authorList>
            <person name="Zhang L."/>
            <person name="Zhou R."/>
        </authorList>
    </citation>
    <scope>NUCLEOTIDE SEQUENCE [MRNA]</scope>
</reference>
<gene>
    <name type="primary">dmrta2</name>
    <name type="synonym">dmrt5</name>
</gene>
<feature type="chain" id="PRO_0000333776" description="Doublesex- and mab-3-related transcription factor A2">
    <location>
        <begin position="1"/>
        <end position="448"/>
    </location>
</feature>
<feature type="domain" description="DMA" evidence="1">
    <location>
        <begin position="259"/>
        <end position="294"/>
    </location>
</feature>
<feature type="DNA-binding region" description="DM" evidence="2">
    <location>
        <begin position="57"/>
        <end position="104"/>
    </location>
</feature>
<feature type="region of interest" description="Disordered" evidence="3">
    <location>
        <begin position="166"/>
        <end position="259"/>
    </location>
</feature>
<feature type="compositionally biased region" description="Polar residues" evidence="3">
    <location>
        <begin position="166"/>
        <end position="187"/>
    </location>
</feature>
<feature type="compositionally biased region" description="Low complexity" evidence="3">
    <location>
        <begin position="229"/>
        <end position="239"/>
    </location>
</feature>
<proteinExistence type="evidence at transcript level"/>